<gene>
    <name type="primary">ASN3</name>
    <name type="ordered locus">At5g10240</name>
    <name type="ORF">F18D22.10</name>
    <name type="ORF">T31P16.230</name>
</gene>
<feature type="initiator methionine" description="Removed" evidence="1">
    <location>
        <position position="1"/>
    </location>
</feature>
<feature type="chain" id="PRO_0000420841" description="Asparagine synthetase [glutamine-hydrolyzing] 3">
    <location>
        <begin position="2"/>
        <end position="578"/>
    </location>
</feature>
<feature type="domain" description="Glutamine amidotransferase type-2" evidence="2">
    <location>
        <begin position="2"/>
        <end position="185"/>
    </location>
</feature>
<feature type="domain" description="Asparagine synthetase">
    <location>
        <begin position="210"/>
        <end position="450"/>
    </location>
</feature>
<feature type="region of interest" description="Disordered" evidence="3">
    <location>
        <begin position="555"/>
        <end position="578"/>
    </location>
</feature>
<feature type="compositionally biased region" description="Basic and acidic residues" evidence="3">
    <location>
        <begin position="555"/>
        <end position="572"/>
    </location>
</feature>
<feature type="active site" description="For GATase activity" evidence="1">
    <location>
        <position position="2"/>
    </location>
</feature>
<feature type="binding site" evidence="1">
    <location>
        <begin position="50"/>
        <end position="54"/>
    </location>
    <ligand>
        <name>L-glutamine</name>
        <dbReference type="ChEBI" id="CHEBI:58359"/>
    </ligand>
</feature>
<feature type="binding site" evidence="1">
    <location>
        <begin position="75"/>
        <end position="77"/>
    </location>
    <ligand>
        <name>L-glutamine</name>
        <dbReference type="ChEBI" id="CHEBI:58359"/>
    </ligand>
</feature>
<feature type="binding site" evidence="1">
    <location>
        <position position="98"/>
    </location>
    <ligand>
        <name>L-glutamine</name>
        <dbReference type="ChEBI" id="CHEBI:58359"/>
    </ligand>
</feature>
<feature type="binding site" evidence="1">
    <location>
        <position position="231"/>
    </location>
    <ligand>
        <name>ATP</name>
        <dbReference type="ChEBI" id="CHEBI:30616"/>
    </ligand>
</feature>
<feature type="binding site" evidence="1">
    <location>
        <position position="267"/>
    </location>
    <ligand>
        <name>ATP</name>
        <dbReference type="ChEBI" id="CHEBI:30616"/>
    </ligand>
</feature>
<feature type="binding site" evidence="1">
    <location>
        <begin position="341"/>
        <end position="342"/>
    </location>
    <ligand>
        <name>ATP</name>
        <dbReference type="ChEBI" id="CHEBI:30616"/>
    </ligand>
</feature>
<feature type="site" description="Important for beta-aspartyl-AMP intermediate formation" evidence="1">
    <location>
        <position position="343"/>
    </location>
</feature>
<feature type="sequence conflict" description="In Ref. 1; AAC72836." evidence="4" ref="1">
    <original>A</original>
    <variation>D</variation>
    <location>
        <position position="83"/>
    </location>
</feature>
<feature type="sequence conflict" description="In Ref. 1; AAC72836." evidence="4" ref="1">
    <original>F</original>
    <variation>L</variation>
    <location>
        <position position="228"/>
    </location>
</feature>
<feature type="sequence conflict" description="In Ref. 1; AAC72836." evidence="4" ref="1">
    <original>E</original>
    <variation>D</variation>
    <location>
        <position position="475"/>
    </location>
</feature>
<keyword id="KW-0025">Alternative splicing</keyword>
<keyword id="KW-0028">Amino-acid biosynthesis</keyword>
<keyword id="KW-0061">Asparagine biosynthesis</keyword>
<keyword id="KW-0067">ATP-binding</keyword>
<keyword id="KW-0315">Glutamine amidotransferase</keyword>
<keyword id="KW-0436">Ligase</keyword>
<keyword id="KW-0547">Nucleotide-binding</keyword>
<keyword id="KW-1185">Reference proteome</keyword>
<sequence length="578" mass="65227">MCGILAVLGCVDNSQAKRSRIIELSRRLRHRGPDWSGLHCYEDCYLAHERLAIVDPTSGDQPLYNEDKTIAVTVNGEIYNHKALRENLKSHQFRTGSDCEVIAHLYEEHGEEFVDMLDGMFAFVLLDTRDKSFIAARDAIGITPLYIGWGLDGSVWFASEMKALSDDCEQFMCFPPGHIYSSKQGGLRRWYNPPWFSEVVPSTPYDPLVVRNTFEKAVIKRLMTDVPFGVLLSGGLDSSLVASVALRHLEKSEAACQWGSKLHTFCIGLKGSPDLKAGREVADYLGTRHHELHFTVQDGIDAIEEVIYHVETYDVTTIRASTPMFLMSRKIKSLGVKMVLSGEGSDEIFGGYLYFHKAPNKKEFHEETCRKIKALHQYDCLRANKSTSAWGVEARVPFLDKEFINVAMSIDPEWKMIRPDLGRIEKWVLRNAFDDEKNPYLPKHILYRQKEQFSDGVGYSWIDGLKDHANKHVSETMLMNASFVFPDNTPLTKEAYYYRTIFEKFFPKSAARATVPGGPSVACSTAKAVEWDAAWSQNLDPSGRAALGVHVSAYGEDKTEDSRPEKLQKLAEKTPAIV</sequence>
<reference key="1">
    <citation type="journal article" date="1998" name="Plant J.">
        <title>Reciprocal regulation of distinct asparagine synthetase genes by light and metabolites in Arabidopsis thaliana.</title>
        <authorList>
            <person name="Lam H.M."/>
            <person name="Hsieh M.H."/>
            <person name="Coruzzi G."/>
        </authorList>
    </citation>
    <scope>NUCLEOTIDE SEQUENCE [MRNA]</scope>
</reference>
<reference key="2">
    <citation type="journal article" date="2000" name="Nature">
        <title>Sequence and analysis of chromosome 5 of the plant Arabidopsis thaliana.</title>
        <authorList>
            <person name="Tabata S."/>
            <person name="Kaneko T."/>
            <person name="Nakamura Y."/>
            <person name="Kotani H."/>
            <person name="Kato T."/>
            <person name="Asamizu E."/>
            <person name="Miyajima N."/>
            <person name="Sasamoto S."/>
            <person name="Kimura T."/>
            <person name="Hosouchi T."/>
            <person name="Kawashima K."/>
            <person name="Kohara M."/>
            <person name="Matsumoto M."/>
            <person name="Matsuno A."/>
            <person name="Muraki A."/>
            <person name="Nakayama S."/>
            <person name="Nakazaki N."/>
            <person name="Naruo K."/>
            <person name="Okumura S."/>
            <person name="Shinpo S."/>
            <person name="Takeuchi C."/>
            <person name="Wada T."/>
            <person name="Watanabe A."/>
            <person name="Yamada M."/>
            <person name="Yasuda M."/>
            <person name="Sato S."/>
            <person name="de la Bastide M."/>
            <person name="Huang E."/>
            <person name="Spiegel L."/>
            <person name="Gnoj L."/>
            <person name="O'Shaughnessy A."/>
            <person name="Preston R."/>
            <person name="Habermann K."/>
            <person name="Murray J."/>
            <person name="Johnson D."/>
            <person name="Rohlfing T."/>
            <person name="Nelson J."/>
            <person name="Stoneking T."/>
            <person name="Pepin K."/>
            <person name="Spieth J."/>
            <person name="Sekhon M."/>
            <person name="Armstrong J."/>
            <person name="Becker M."/>
            <person name="Belter E."/>
            <person name="Cordum H."/>
            <person name="Cordes M."/>
            <person name="Courtney L."/>
            <person name="Courtney W."/>
            <person name="Dante M."/>
            <person name="Du H."/>
            <person name="Edwards J."/>
            <person name="Fryman J."/>
            <person name="Haakensen B."/>
            <person name="Lamar E."/>
            <person name="Latreille P."/>
            <person name="Leonard S."/>
            <person name="Meyer R."/>
            <person name="Mulvaney E."/>
            <person name="Ozersky P."/>
            <person name="Riley A."/>
            <person name="Strowmatt C."/>
            <person name="Wagner-McPherson C."/>
            <person name="Wollam A."/>
            <person name="Yoakum M."/>
            <person name="Bell M."/>
            <person name="Dedhia N."/>
            <person name="Parnell L."/>
            <person name="Shah R."/>
            <person name="Rodriguez M."/>
            <person name="Hoon See L."/>
            <person name="Vil D."/>
            <person name="Baker J."/>
            <person name="Kirchoff K."/>
            <person name="Toth K."/>
            <person name="King L."/>
            <person name="Bahret A."/>
            <person name="Miller B."/>
            <person name="Marra M.A."/>
            <person name="Martienssen R."/>
            <person name="McCombie W.R."/>
            <person name="Wilson R.K."/>
            <person name="Murphy G."/>
            <person name="Bancroft I."/>
            <person name="Volckaert G."/>
            <person name="Wambutt R."/>
            <person name="Duesterhoeft A."/>
            <person name="Stiekema W."/>
            <person name="Pohl T."/>
            <person name="Entian K.-D."/>
            <person name="Terryn N."/>
            <person name="Hartley N."/>
            <person name="Bent E."/>
            <person name="Johnson S."/>
            <person name="Langham S.-A."/>
            <person name="McCullagh B."/>
            <person name="Robben J."/>
            <person name="Grymonprez B."/>
            <person name="Zimmermann W."/>
            <person name="Ramsperger U."/>
            <person name="Wedler H."/>
            <person name="Balke K."/>
            <person name="Wedler E."/>
            <person name="Peters S."/>
            <person name="van Staveren M."/>
            <person name="Dirkse W."/>
            <person name="Mooijman P."/>
            <person name="Klein Lankhorst R."/>
            <person name="Weitzenegger T."/>
            <person name="Bothe G."/>
            <person name="Rose M."/>
            <person name="Hauf J."/>
            <person name="Berneiser S."/>
            <person name="Hempel S."/>
            <person name="Feldpausch M."/>
            <person name="Lamberth S."/>
            <person name="Villarroel R."/>
            <person name="Gielen J."/>
            <person name="Ardiles W."/>
            <person name="Bents O."/>
            <person name="Lemcke K."/>
            <person name="Kolesov G."/>
            <person name="Mayer K.F.X."/>
            <person name="Rudd S."/>
            <person name="Schoof H."/>
            <person name="Schueller C."/>
            <person name="Zaccaria P."/>
            <person name="Mewes H.-W."/>
            <person name="Bevan M."/>
            <person name="Fransz P.F."/>
        </authorList>
    </citation>
    <scope>NUCLEOTIDE SEQUENCE [LARGE SCALE GENOMIC DNA]</scope>
    <source>
        <strain>cv. Columbia</strain>
    </source>
</reference>
<reference key="3">
    <citation type="journal article" date="2017" name="Plant J.">
        <title>Araport11: a complete reannotation of the Arabidopsis thaliana reference genome.</title>
        <authorList>
            <person name="Cheng C.Y."/>
            <person name="Krishnakumar V."/>
            <person name="Chan A.P."/>
            <person name="Thibaud-Nissen F."/>
            <person name="Schobel S."/>
            <person name="Town C.D."/>
        </authorList>
    </citation>
    <scope>GENOME REANNOTATION</scope>
    <source>
        <strain>cv. Columbia</strain>
    </source>
</reference>
<reference key="4">
    <citation type="journal article" date="2003" name="Science">
        <title>Empirical analysis of transcriptional activity in the Arabidopsis genome.</title>
        <authorList>
            <person name="Yamada K."/>
            <person name="Lim J."/>
            <person name="Dale J.M."/>
            <person name="Chen H."/>
            <person name="Shinn P."/>
            <person name="Palm C.J."/>
            <person name="Southwick A.M."/>
            <person name="Wu H.C."/>
            <person name="Kim C.J."/>
            <person name="Nguyen M."/>
            <person name="Pham P.K."/>
            <person name="Cheuk R.F."/>
            <person name="Karlin-Newmann G."/>
            <person name="Liu S.X."/>
            <person name="Lam B."/>
            <person name="Sakano H."/>
            <person name="Wu T."/>
            <person name="Yu G."/>
            <person name="Miranda M."/>
            <person name="Quach H.L."/>
            <person name="Tripp M."/>
            <person name="Chang C.H."/>
            <person name="Lee J.M."/>
            <person name="Toriumi M.J."/>
            <person name="Chan M.M."/>
            <person name="Tang C.C."/>
            <person name="Onodera C.S."/>
            <person name="Deng J.M."/>
            <person name="Akiyama K."/>
            <person name="Ansari Y."/>
            <person name="Arakawa T."/>
            <person name="Banh J."/>
            <person name="Banno F."/>
            <person name="Bowser L."/>
            <person name="Brooks S.Y."/>
            <person name="Carninci P."/>
            <person name="Chao Q."/>
            <person name="Choy N."/>
            <person name="Enju A."/>
            <person name="Goldsmith A.D."/>
            <person name="Gurjal M."/>
            <person name="Hansen N.F."/>
            <person name="Hayashizaki Y."/>
            <person name="Johnson-Hopson C."/>
            <person name="Hsuan V.W."/>
            <person name="Iida K."/>
            <person name="Karnes M."/>
            <person name="Khan S."/>
            <person name="Koesema E."/>
            <person name="Ishida J."/>
            <person name="Jiang P.X."/>
            <person name="Jones T."/>
            <person name="Kawai J."/>
            <person name="Kamiya A."/>
            <person name="Meyers C."/>
            <person name="Nakajima M."/>
            <person name="Narusaka M."/>
            <person name="Seki M."/>
            <person name="Sakurai T."/>
            <person name="Satou M."/>
            <person name="Tamse R."/>
            <person name="Vaysberg M."/>
            <person name="Wallender E.K."/>
            <person name="Wong C."/>
            <person name="Yamamura Y."/>
            <person name="Yuan S."/>
            <person name="Shinozaki K."/>
            <person name="Davis R.W."/>
            <person name="Theologis A."/>
            <person name="Ecker J.R."/>
        </authorList>
    </citation>
    <scope>NUCLEOTIDE SEQUENCE [LARGE SCALE MRNA]</scope>
    <source>
        <strain>cv. Columbia</strain>
    </source>
</reference>
<evidence type="ECO:0000250" key="1"/>
<evidence type="ECO:0000255" key="2">
    <source>
        <dbReference type="PROSITE-ProRule" id="PRU00609"/>
    </source>
</evidence>
<evidence type="ECO:0000256" key="3">
    <source>
        <dbReference type="SAM" id="MobiDB-lite"/>
    </source>
</evidence>
<evidence type="ECO:0000305" key="4"/>
<organism>
    <name type="scientific">Arabidopsis thaliana</name>
    <name type="common">Mouse-ear cress</name>
    <dbReference type="NCBI Taxonomy" id="3702"/>
    <lineage>
        <taxon>Eukaryota</taxon>
        <taxon>Viridiplantae</taxon>
        <taxon>Streptophyta</taxon>
        <taxon>Embryophyta</taxon>
        <taxon>Tracheophyta</taxon>
        <taxon>Spermatophyta</taxon>
        <taxon>Magnoliopsida</taxon>
        <taxon>eudicotyledons</taxon>
        <taxon>Gunneridae</taxon>
        <taxon>Pentapetalae</taxon>
        <taxon>rosids</taxon>
        <taxon>malvids</taxon>
        <taxon>Brassicales</taxon>
        <taxon>Brassicaceae</taxon>
        <taxon>Camelineae</taxon>
        <taxon>Arabidopsis</taxon>
    </lineage>
</organism>
<protein>
    <recommendedName>
        <fullName>Asparagine synthetase [glutamine-hydrolyzing] 3</fullName>
        <ecNumber>6.3.5.4</ecNumber>
    </recommendedName>
    <alternativeName>
        <fullName>Glutamine-dependent asparagine synthetase 3</fullName>
    </alternativeName>
</protein>
<accession>Q9LFU1</accession>
<accession>Q9LEA1</accession>
<accession>Q9ZST7</accession>
<comment type="function">
    <text evidence="1">Essential for nitrogen assimilation, distribution and remobilization within the plant via the phloem.</text>
</comment>
<comment type="catalytic activity">
    <reaction>
        <text>L-aspartate + L-glutamine + ATP + H2O = L-asparagine + L-glutamate + AMP + diphosphate + H(+)</text>
        <dbReference type="Rhea" id="RHEA:12228"/>
        <dbReference type="ChEBI" id="CHEBI:15377"/>
        <dbReference type="ChEBI" id="CHEBI:15378"/>
        <dbReference type="ChEBI" id="CHEBI:29985"/>
        <dbReference type="ChEBI" id="CHEBI:29991"/>
        <dbReference type="ChEBI" id="CHEBI:30616"/>
        <dbReference type="ChEBI" id="CHEBI:33019"/>
        <dbReference type="ChEBI" id="CHEBI:58048"/>
        <dbReference type="ChEBI" id="CHEBI:58359"/>
        <dbReference type="ChEBI" id="CHEBI:456215"/>
        <dbReference type="EC" id="6.3.5.4"/>
    </reaction>
</comment>
<comment type="pathway">
    <text>Amino-acid biosynthesis; L-asparagine biosynthesis.</text>
</comment>
<comment type="alternative products">
    <event type="alternative splicing"/>
    <isoform>
        <id>Q9LFU1-1</id>
        <name>1</name>
        <sequence type="displayed"/>
    </isoform>
    <text>A number of isoforms are produced. According to EST sequences.</text>
</comment>
<dbReference type="EC" id="6.3.5.4"/>
<dbReference type="EMBL" id="AF095452">
    <property type="protein sequence ID" value="AAC72836.1"/>
    <property type="molecule type" value="mRNA"/>
</dbReference>
<dbReference type="EMBL" id="AL356332">
    <property type="protein sequence ID" value="CAB92065.1"/>
    <property type="molecule type" value="Genomic_DNA"/>
</dbReference>
<dbReference type="EMBL" id="AL360334">
    <property type="protein sequence ID" value="CAB96680.1"/>
    <property type="molecule type" value="Genomic_DNA"/>
</dbReference>
<dbReference type="EMBL" id="CP002688">
    <property type="protein sequence ID" value="AED91511.1"/>
    <property type="molecule type" value="Genomic_DNA"/>
</dbReference>
<dbReference type="EMBL" id="BT003929">
    <property type="protein sequence ID" value="AAO41976.1"/>
    <property type="molecule type" value="mRNA"/>
</dbReference>
<dbReference type="EMBL" id="BT005014">
    <property type="protein sequence ID" value="AAO50547.1"/>
    <property type="molecule type" value="mRNA"/>
</dbReference>
<dbReference type="PIR" id="T50812">
    <property type="entry name" value="T50812"/>
</dbReference>
<dbReference type="PIR" id="T51888">
    <property type="entry name" value="T51888"/>
</dbReference>
<dbReference type="RefSeq" id="NP_196586.1">
    <molecule id="Q9LFU1-1"/>
    <property type="nucleotide sequence ID" value="NM_121062.5"/>
</dbReference>
<dbReference type="SMR" id="Q9LFU1"/>
<dbReference type="BioGRID" id="16166">
    <property type="interactions" value="2"/>
</dbReference>
<dbReference type="FunCoup" id="Q9LFU1">
    <property type="interactions" value="2256"/>
</dbReference>
<dbReference type="IntAct" id="Q9LFU1">
    <property type="interactions" value="1"/>
</dbReference>
<dbReference type="STRING" id="3702.Q9LFU1"/>
<dbReference type="iPTMnet" id="Q9LFU1"/>
<dbReference type="PaxDb" id="3702-AT5G10240.1"/>
<dbReference type="ProMEX" id="Q9LFU1"/>
<dbReference type="ProteomicsDB" id="246863">
    <molecule id="Q9LFU1-1"/>
</dbReference>
<dbReference type="EnsemblPlants" id="AT5G10240.1">
    <molecule id="Q9LFU1-1"/>
    <property type="protein sequence ID" value="AT5G10240.1"/>
    <property type="gene ID" value="AT5G10240"/>
</dbReference>
<dbReference type="GeneID" id="830888"/>
<dbReference type="Gramene" id="AT5G10240.1">
    <molecule id="Q9LFU1-1"/>
    <property type="protein sequence ID" value="AT5G10240.1"/>
    <property type="gene ID" value="AT5G10240"/>
</dbReference>
<dbReference type="KEGG" id="ath:AT5G10240"/>
<dbReference type="Araport" id="AT5G10240"/>
<dbReference type="TAIR" id="AT5G10240">
    <property type="gene designation" value="ASN3"/>
</dbReference>
<dbReference type="eggNOG" id="KOG0571">
    <property type="taxonomic scope" value="Eukaryota"/>
</dbReference>
<dbReference type="HOGENOM" id="CLU_014658_2_2_1"/>
<dbReference type="InParanoid" id="Q9LFU1"/>
<dbReference type="OMA" id="GIVCAFD"/>
<dbReference type="PhylomeDB" id="Q9LFU1"/>
<dbReference type="BRENDA" id="6.3.5.4">
    <property type="organism ID" value="399"/>
</dbReference>
<dbReference type="UniPathway" id="UPA00134"/>
<dbReference type="PRO" id="PR:Q9LFU1"/>
<dbReference type="Proteomes" id="UP000006548">
    <property type="component" value="Chromosome 5"/>
</dbReference>
<dbReference type="ExpressionAtlas" id="Q9LFU1">
    <property type="expression patterns" value="baseline and differential"/>
</dbReference>
<dbReference type="GO" id="GO:0004066">
    <property type="term" value="F:asparagine synthase (glutamine-hydrolyzing) activity"/>
    <property type="evidence" value="ECO:0007669"/>
    <property type="project" value="UniProtKB-EC"/>
</dbReference>
<dbReference type="GO" id="GO:0005524">
    <property type="term" value="F:ATP binding"/>
    <property type="evidence" value="ECO:0007669"/>
    <property type="project" value="UniProtKB-KW"/>
</dbReference>
<dbReference type="GO" id="GO:0070981">
    <property type="term" value="P:L-asparagine biosynthetic process"/>
    <property type="evidence" value="ECO:0007669"/>
    <property type="project" value="UniProtKB-UniPathway"/>
</dbReference>
<dbReference type="CDD" id="cd01991">
    <property type="entry name" value="Asn_synthase_B_C"/>
    <property type="match status" value="1"/>
</dbReference>
<dbReference type="CDD" id="cd00712">
    <property type="entry name" value="AsnB"/>
    <property type="match status" value="1"/>
</dbReference>
<dbReference type="FunFam" id="3.40.50.620:FF:000055">
    <property type="entry name" value="Asparagine synthetase [glutamine-hydrolyzing]"/>
    <property type="match status" value="1"/>
</dbReference>
<dbReference type="FunFam" id="3.60.20.10:FF:000024">
    <property type="entry name" value="Asparagine synthetase [glutamine-hydrolyzing]"/>
    <property type="match status" value="1"/>
</dbReference>
<dbReference type="Gene3D" id="3.60.20.10">
    <property type="entry name" value="Glutamine Phosphoribosylpyrophosphate, subunit 1, domain 1"/>
    <property type="match status" value="1"/>
</dbReference>
<dbReference type="Gene3D" id="3.40.50.620">
    <property type="entry name" value="HUPs"/>
    <property type="match status" value="1"/>
</dbReference>
<dbReference type="InterPro" id="IPR006426">
    <property type="entry name" value="Asn_synth_AEB"/>
</dbReference>
<dbReference type="InterPro" id="IPR001962">
    <property type="entry name" value="Asn_synthase"/>
</dbReference>
<dbReference type="InterPro" id="IPR050795">
    <property type="entry name" value="Asn_Synthetase"/>
</dbReference>
<dbReference type="InterPro" id="IPR033738">
    <property type="entry name" value="AsnB_N"/>
</dbReference>
<dbReference type="InterPro" id="IPR017932">
    <property type="entry name" value="GATase_2_dom"/>
</dbReference>
<dbReference type="InterPro" id="IPR029055">
    <property type="entry name" value="Ntn_hydrolases_N"/>
</dbReference>
<dbReference type="InterPro" id="IPR014729">
    <property type="entry name" value="Rossmann-like_a/b/a_fold"/>
</dbReference>
<dbReference type="NCBIfam" id="TIGR01536">
    <property type="entry name" value="asn_synth_AEB"/>
    <property type="match status" value="1"/>
</dbReference>
<dbReference type="NCBIfam" id="NF006949">
    <property type="entry name" value="PRK09431.1"/>
    <property type="match status" value="1"/>
</dbReference>
<dbReference type="PANTHER" id="PTHR11772">
    <property type="entry name" value="ASPARAGINE SYNTHETASE"/>
    <property type="match status" value="1"/>
</dbReference>
<dbReference type="PANTHER" id="PTHR11772:SF38">
    <property type="entry name" value="ASPARAGINE SYNTHETASE [GLUTAMINE-HYDROLYZING] 3"/>
    <property type="match status" value="1"/>
</dbReference>
<dbReference type="Pfam" id="PF00733">
    <property type="entry name" value="Asn_synthase"/>
    <property type="match status" value="1"/>
</dbReference>
<dbReference type="Pfam" id="PF13537">
    <property type="entry name" value="GATase_7"/>
    <property type="match status" value="1"/>
</dbReference>
<dbReference type="PIRSF" id="PIRSF001589">
    <property type="entry name" value="Asn_synthetase_glu-h"/>
    <property type="match status" value="1"/>
</dbReference>
<dbReference type="SUPFAM" id="SSF52402">
    <property type="entry name" value="Adenine nucleotide alpha hydrolases-like"/>
    <property type="match status" value="1"/>
</dbReference>
<dbReference type="SUPFAM" id="SSF56235">
    <property type="entry name" value="N-terminal nucleophile aminohydrolases (Ntn hydrolases)"/>
    <property type="match status" value="1"/>
</dbReference>
<dbReference type="PROSITE" id="PS51278">
    <property type="entry name" value="GATASE_TYPE_2"/>
    <property type="match status" value="1"/>
</dbReference>
<proteinExistence type="evidence at transcript level"/>
<name>ASNS3_ARATH</name>